<dbReference type="EMBL" id="L42023">
    <property type="protein sequence ID" value="AAC22451.1"/>
    <property type="molecule type" value="Genomic_DNA"/>
</dbReference>
<dbReference type="PIR" id="B64094">
    <property type="entry name" value="B64094"/>
</dbReference>
<dbReference type="RefSeq" id="NP_438952.1">
    <property type="nucleotide sequence ID" value="NC_000907.1"/>
</dbReference>
<dbReference type="SMR" id="P44347"/>
<dbReference type="STRING" id="71421.HI_0793"/>
<dbReference type="EnsemblBacteria" id="AAC22451">
    <property type="protein sequence ID" value="AAC22451"/>
    <property type="gene ID" value="HI_0793"/>
</dbReference>
<dbReference type="KEGG" id="hin:HI_0793"/>
<dbReference type="PATRIC" id="fig|71421.8.peg.832"/>
<dbReference type="eggNOG" id="COG0097">
    <property type="taxonomic scope" value="Bacteria"/>
</dbReference>
<dbReference type="HOGENOM" id="CLU_065464_1_2_6"/>
<dbReference type="OrthoDB" id="9805007at2"/>
<dbReference type="PhylomeDB" id="P44347"/>
<dbReference type="BioCyc" id="HINF71421:G1GJ1-833-MONOMER"/>
<dbReference type="Proteomes" id="UP000000579">
    <property type="component" value="Chromosome"/>
</dbReference>
<dbReference type="GO" id="GO:0022625">
    <property type="term" value="C:cytosolic large ribosomal subunit"/>
    <property type="evidence" value="ECO:0000318"/>
    <property type="project" value="GO_Central"/>
</dbReference>
<dbReference type="GO" id="GO:0019843">
    <property type="term" value="F:rRNA binding"/>
    <property type="evidence" value="ECO:0007669"/>
    <property type="project" value="UniProtKB-UniRule"/>
</dbReference>
<dbReference type="GO" id="GO:0003735">
    <property type="term" value="F:structural constituent of ribosome"/>
    <property type="evidence" value="ECO:0000318"/>
    <property type="project" value="GO_Central"/>
</dbReference>
<dbReference type="GO" id="GO:0002181">
    <property type="term" value="P:cytoplasmic translation"/>
    <property type="evidence" value="ECO:0000318"/>
    <property type="project" value="GO_Central"/>
</dbReference>
<dbReference type="FunFam" id="3.90.930.12:FF:000001">
    <property type="entry name" value="50S ribosomal protein L6"/>
    <property type="match status" value="1"/>
</dbReference>
<dbReference type="FunFam" id="3.90.930.12:FF:000002">
    <property type="entry name" value="50S ribosomal protein L6"/>
    <property type="match status" value="1"/>
</dbReference>
<dbReference type="Gene3D" id="3.90.930.12">
    <property type="entry name" value="Ribosomal protein L6, alpha-beta domain"/>
    <property type="match status" value="2"/>
</dbReference>
<dbReference type="HAMAP" id="MF_01365_B">
    <property type="entry name" value="Ribosomal_uL6_B"/>
    <property type="match status" value="1"/>
</dbReference>
<dbReference type="InterPro" id="IPR000702">
    <property type="entry name" value="Ribosomal_uL6-like"/>
</dbReference>
<dbReference type="InterPro" id="IPR036789">
    <property type="entry name" value="Ribosomal_uL6-like_a/b-dom_sf"/>
</dbReference>
<dbReference type="InterPro" id="IPR020040">
    <property type="entry name" value="Ribosomal_uL6_a/b-dom"/>
</dbReference>
<dbReference type="InterPro" id="IPR019906">
    <property type="entry name" value="Ribosomal_uL6_bac-type"/>
</dbReference>
<dbReference type="InterPro" id="IPR002358">
    <property type="entry name" value="Ribosomal_uL6_CS"/>
</dbReference>
<dbReference type="NCBIfam" id="TIGR03654">
    <property type="entry name" value="L6_bact"/>
    <property type="match status" value="1"/>
</dbReference>
<dbReference type="PANTHER" id="PTHR11655">
    <property type="entry name" value="60S/50S RIBOSOMAL PROTEIN L6/L9"/>
    <property type="match status" value="1"/>
</dbReference>
<dbReference type="PANTHER" id="PTHR11655:SF14">
    <property type="entry name" value="LARGE RIBOSOMAL SUBUNIT PROTEIN UL6M"/>
    <property type="match status" value="1"/>
</dbReference>
<dbReference type="Pfam" id="PF00347">
    <property type="entry name" value="Ribosomal_L6"/>
    <property type="match status" value="2"/>
</dbReference>
<dbReference type="PIRSF" id="PIRSF002162">
    <property type="entry name" value="Ribosomal_L6"/>
    <property type="match status" value="1"/>
</dbReference>
<dbReference type="PRINTS" id="PR00059">
    <property type="entry name" value="RIBOSOMALL6"/>
</dbReference>
<dbReference type="SUPFAM" id="SSF56053">
    <property type="entry name" value="Ribosomal protein L6"/>
    <property type="match status" value="2"/>
</dbReference>
<dbReference type="PROSITE" id="PS00525">
    <property type="entry name" value="RIBOSOMAL_L6_1"/>
    <property type="match status" value="1"/>
</dbReference>
<accession>P44347</accession>
<reference key="1">
    <citation type="journal article" date="1995" name="Science">
        <title>Whole-genome random sequencing and assembly of Haemophilus influenzae Rd.</title>
        <authorList>
            <person name="Fleischmann R.D."/>
            <person name="Adams M.D."/>
            <person name="White O."/>
            <person name="Clayton R.A."/>
            <person name="Kirkness E.F."/>
            <person name="Kerlavage A.R."/>
            <person name="Bult C.J."/>
            <person name="Tomb J.-F."/>
            <person name="Dougherty B.A."/>
            <person name="Merrick J.M."/>
            <person name="McKenney K."/>
            <person name="Sutton G.G."/>
            <person name="FitzHugh W."/>
            <person name="Fields C.A."/>
            <person name="Gocayne J.D."/>
            <person name="Scott J.D."/>
            <person name="Shirley R."/>
            <person name="Liu L.-I."/>
            <person name="Glodek A."/>
            <person name="Kelley J.M."/>
            <person name="Weidman J.F."/>
            <person name="Phillips C.A."/>
            <person name="Spriggs T."/>
            <person name="Hedblom E."/>
            <person name="Cotton M.D."/>
            <person name="Utterback T.R."/>
            <person name="Hanna M.C."/>
            <person name="Nguyen D.T."/>
            <person name="Saudek D.M."/>
            <person name="Brandon R.C."/>
            <person name="Fine L.D."/>
            <person name="Fritchman J.L."/>
            <person name="Fuhrmann J.L."/>
            <person name="Geoghagen N.S.M."/>
            <person name="Gnehm C.L."/>
            <person name="McDonald L.A."/>
            <person name="Small K.V."/>
            <person name="Fraser C.M."/>
            <person name="Smith H.O."/>
            <person name="Venter J.C."/>
        </authorList>
    </citation>
    <scope>NUCLEOTIDE SEQUENCE [LARGE SCALE GENOMIC DNA]</scope>
    <source>
        <strain>ATCC 51907 / DSM 11121 / KW20 / Rd</strain>
    </source>
</reference>
<gene>
    <name evidence="2" type="primary">rplF</name>
    <name evidence="2" type="synonym">rpl6</name>
    <name type="ordered locus">HI_0793</name>
</gene>
<name>RL6_HAEIN</name>
<keyword id="KW-1185">Reference proteome</keyword>
<keyword id="KW-0687">Ribonucleoprotein</keyword>
<keyword id="KW-0689">Ribosomal protein</keyword>
<keyword id="KW-0694">RNA-binding</keyword>
<keyword id="KW-0699">rRNA-binding</keyword>
<protein>
    <recommendedName>
        <fullName evidence="2">Large ribosomal subunit protein uL6</fullName>
    </recommendedName>
    <alternativeName>
        <fullName evidence="3">50S ribosomal protein L6</fullName>
    </alternativeName>
</protein>
<feature type="initiator methionine" description="Removed" evidence="1">
    <location>
        <position position="1"/>
    </location>
</feature>
<feature type="chain" id="PRO_0000131051" description="Large ribosomal subunit protein uL6">
    <location>
        <begin position="2"/>
        <end position="177"/>
    </location>
</feature>
<organism>
    <name type="scientific">Haemophilus influenzae (strain ATCC 51907 / DSM 11121 / KW20 / Rd)</name>
    <dbReference type="NCBI Taxonomy" id="71421"/>
    <lineage>
        <taxon>Bacteria</taxon>
        <taxon>Pseudomonadati</taxon>
        <taxon>Pseudomonadota</taxon>
        <taxon>Gammaproteobacteria</taxon>
        <taxon>Pasteurellales</taxon>
        <taxon>Pasteurellaceae</taxon>
        <taxon>Haemophilus</taxon>
    </lineage>
</organism>
<sequence>MSRVAKAPVNIPAGVEVKLDGQLLTVKGKNGELSRKIHESVEVKQDNGQFTFTPREGFVEANAQSGTARALVNAMVIGVTEGFTKKLVLVGVGYRAQLKGNAIALSLGYSHPVEHTLPVGITAECPSQTEIVLKGADKQLIGQVAADIRAYRRPEPYKGKGVRYADEVVRIKEAKKK</sequence>
<proteinExistence type="inferred from homology"/>
<evidence type="ECO:0000250" key="1"/>
<evidence type="ECO:0000255" key="2">
    <source>
        <dbReference type="HAMAP-Rule" id="MF_01365"/>
    </source>
</evidence>
<evidence type="ECO:0000305" key="3"/>
<comment type="function">
    <text evidence="2">This protein binds to the 23S rRNA, and is important in its secondary structure. It is located near the subunit interface in the base of the L7/L12 stalk, and near the tRNA binding site of the peptidyltransferase center.</text>
</comment>
<comment type="subunit">
    <text evidence="2">Part of the 50S ribosomal subunit.</text>
</comment>
<comment type="similarity">
    <text evidence="2">Belongs to the universal ribosomal protein uL6 family.</text>
</comment>